<proteinExistence type="inferred from homology"/>
<comment type="function">
    <text evidence="1">One of the essential components for the initiation of protein synthesis. Stabilizes the binding of IF-2 and IF-3 on the 30S subunit to which N-formylmethionyl-tRNA(fMet) subsequently binds. Helps modulate mRNA selection, yielding the 30S pre-initiation complex (PIC). Upon addition of the 50S ribosomal subunit IF-1, IF-2 and IF-3 are released leaving the mature 70S translation initiation complex.</text>
</comment>
<comment type="subunit">
    <text evidence="1">Component of the 30S ribosomal translation pre-initiation complex which assembles on the 30S ribosome in the order IF-2 and IF-3, IF-1 and N-formylmethionyl-tRNA(fMet); mRNA recruitment can occur at any time during PIC assembly.</text>
</comment>
<comment type="subcellular location">
    <subcellularLocation>
        <location evidence="1">Plastid</location>
        <location evidence="1">Chloroplast</location>
    </subcellularLocation>
</comment>
<comment type="similarity">
    <text evidence="1">Belongs to the IF-1 family.</text>
</comment>
<evidence type="ECO:0000255" key="1">
    <source>
        <dbReference type="HAMAP-Rule" id="MF_00075"/>
    </source>
</evidence>
<accession>Q06GW2</accession>
<sequence>MKEQKLIHEGLITESLPNGMFRVRLDNEDLILGYVSGRIRRSFIRILPGDRVKIEVSSYDSTKGRIIYRLRNKDSND</sequence>
<feature type="chain" id="PRO_0000275391" description="Translation initiation factor IF-1, chloroplastic">
    <location>
        <begin position="1"/>
        <end position="77"/>
    </location>
</feature>
<feature type="domain" description="S1-like" evidence="1">
    <location>
        <begin position="1"/>
        <end position="71"/>
    </location>
</feature>
<reference key="1">
    <citation type="journal article" date="2006" name="BMC Evol. Biol.">
        <title>Complete plastid genome sequences of Drimys, Liriodendron, and Piper: implications for the phylogenetic relationships of magnoliids.</title>
        <authorList>
            <person name="Cai Z."/>
            <person name="Penaflor C."/>
            <person name="Kuehl J.V."/>
            <person name="Leebens-Mack J."/>
            <person name="Carlson J.E."/>
            <person name="dePamphilis C.W."/>
            <person name="Boore J.L."/>
            <person name="Jansen R.K."/>
        </authorList>
    </citation>
    <scope>NUCLEOTIDE SEQUENCE [LARGE SCALE GENOMIC DNA]</scope>
</reference>
<protein>
    <recommendedName>
        <fullName evidence="1">Translation initiation factor IF-1, chloroplastic</fullName>
    </recommendedName>
</protein>
<name>IF1C_DRIGR</name>
<gene>
    <name evidence="1" type="primary">infA</name>
</gene>
<dbReference type="EMBL" id="DQ887676">
    <property type="protein sequence ID" value="ABH88331.1"/>
    <property type="molecule type" value="Genomic_DNA"/>
</dbReference>
<dbReference type="RefSeq" id="YP_784421.1">
    <property type="nucleotide sequence ID" value="NC_008456.1"/>
</dbReference>
<dbReference type="SMR" id="Q06GW2"/>
<dbReference type="GeneID" id="4363607"/>
<dbReference type="GO" id="GO:0009507">
    <property type="term" value="C:chloroplast"/>
    <property type="evidence" value="ECO:0007669"/>
    <property type="project" value="UniProtKB-SubCell"/>
</dbReference>
<dbReference type="GO" id="GO:0005829">
    <property type="term" value="C:cytosol"/>
    <property type="evidence" value="ECO:0007669"/>
    <property type="project" value="TreeGrafter"/>
</dbReference>
<dbReference type="GO" id="GO:0043022">
    <property type="term" value="F:ribosome binding"/>
    <property type="evidence" value="ECO:0007669"/>
    <property type="project" value="UniProtKB-UniRule"/>
</dbReference>
<dbReference type="GO" id="GO:0019843">
    <property type="term" value="F:rRNA binding"/>
    <property type="evidence" value="ECO:0007669"/>
    <property type="project" value="UniProtKB-UniRule"/>
</dbReference>
<dbReference type="GO" id="GO:0003743">
    <property type="term" value="F:translation initiation factor activity"/>
    <property type="evidence" value="ECO:0007669"/>
    <property type="project" value="UniProtKB-UniRule"/>
</dbReference>
<dbReference type="CDD" id="cd04451">
    <property type="entry name" value="S1_IF1"/>
    <property type="match status" value="1"/>
</dbReference>
<dbReference type="FunFam" id="2.40.50.140:FF:000019">
    <property type="entry name" value="Translation initiation factor IF-1, chloroplastic"/>
    <property type="match status" value="1"/>
</dbReference>
<dbReference type="Gene3D" id="2.40.50.140">
    <property type="entry name" value="Nucleic acid-binding proteins"/>
    <property type="match status" value="1"/>
</dbReference>
<dbReference type="HAMAP" id="MF_00075">
    <property type="entry name" value="IF_1"/>
    <property type="match status" value="1"/>
</dbReference>
<dbReference type="InterPro" id="IPR012340">
    <property type="entry name" value="NA-bd_OB-fold"/>
</dbReference>
<dbReference type="InterPro" id="IPR006196">
    <property type="entry name" value="RNA-binding_domain_S1_IF1"/>
</dbReference>
<dbReference type="InterPro" id="IPR003029">
    <property type="entry name" value="S1_domain"/>
</dbReference>
<dbReference type="InterPro" id="IPR004368">
    <property type="entry name" value="TIF_IF1"/>
</dbReference>
<dbReference type="NCBIfam" id="TIGR00008">
    <property type="entry name" value="infA"/>
    <property type="match status" value="1"/>
</dbReference>
<dbReference type="PANTHER" id="PTHR33370">
    <property type="entry name" value="TRANSLATION INITIATION FACTOR IF-1, CHLOROPLASTIC"/>
    <property type="match status" value="1"/>
</dbReference>
<dbReference type="PANTHER" id="PTHR33370:SF1">
    <property type="entry name" value="TRANSLATION INITIATION FACTOR IF-1, CHLOROPLASTIC"/>
    <property type="match status" value="1"/>
</dbReference>
<dbReference type="Pfam" id="PF01176">
    <property type="entry name" value="eIF-1a"/>
    <property type="match status" value="1"/>
</dbReference>
<dbReference type="SMART" id="SM00316">
    <property type="entry name" value="S1"/>
    <property type="match status" value="1"/>
</dbReference>
<dbReference type="SUPFAM" id="SSF50249">
    <property type="entry name" value="Nucleic acid-binding proteins"/>
    <property type="match status" value="1"/>
</dbReference>
<dbReference type="PROSITE" id="PS50832">
    <property type="entry name" value="S1_IF1_TYPE"/>
    <property type="match status" value="1"/>
</dbReference>
<organism>
    <name type="scientific">Drimys granadensis</name>
    <dbReference type="NCBI Taxonomy" id="224735"/>
    <lineage>
        <taxon>Eukaryota</taxon>
        <taxon>Viridiplantae</taxon>
        <taxon>Streptophyta</taxon>
        <taxon>Embryophyta</taxon>
        <taxon>Tracheophyta</taxon>
        <taxon>Spermatophyta</taxon>
        <taxon>Magnoliopsida</taxon>
        <taxon>Magnoliidae</taxon>
        <taxon>Canellales</taxon>
        <taxon>Winteraceae</taxon>
        <taxon>Drimys</taxon>
    </lineage>
</organism>
<geneLocation type="chloroplast"/>
<keyword id="KW-0150">Chloroplast</keyword>
<keyword id="KW-0396">Initiation factor</keyword>
<keyword id="KW-0934">Plastid</keyword>
<keyword id="KW-0648">Protein biosynthesis</keyword>
<keyword id="KW-0694">RNA-binding</keyword>
<keyword id="KW-0699">rRNA-binding</keyword>